<keyword id="KW-0256">Endoplasmic reticulum</keyword>
<keyword id="KW-0472">Membrane</keyword>
<keyword id="KW-1185">Reference proteome</keyword>
<keyword id="KW-0735">Signal-anchor</keyword>
<keyword id="KW-0812">Transmembrane</keyword>
<keyword id="KW-1133">Transmembrane helix</keyword>
<gene>
    <name type="ORF">GH21310</name>
</gene>
<feature type="chain" id="PRO_0000386610" description="Dolichyl-diphosphooligosaccharide--protein glycosyltransferase subunit 4">
    <location>
        <begin position="1"/>
        <end position="40"/>
    </location>
</feature>
<feature type="topological domain" description="Lumenal" evidence="4">
    <location>
        <begin position="1"/>
        <end position="4"/>
    </location>
</feature>
<feature type="transmembrane region" description="Helical" evidence="4">
    <location>
        <begin position="5"/>
        <end position="25"/>
    </location>
</feature>
<feature type="topological domain" description="Cytoplasmic" evidence="4">
    <location>
        <begin position="26"/>
        <end position="40"/>
    </location>
</feature>
<sequence>MITDVQLAIFSNVLGVFLFLLVVAYHYINANTGKSIIKSK</sequence>
<organism>
    <name type="scientific">Drosophila grimshawi</name>
    <name type="common">Hawaiian fruit fly</name>
    <name type="synonym">Idiomyia grimshawi</name>
    <dbReference type="NCBI Taxonomy" id="7222"/>
    <lineage>
        <taxon>Eukaryota</taxon>
        <taxon>Metazoa</taxon>
        <taxon>Ecdysozoa</taxon>
        <taxon>Arthropoda</taxon>
        <taxon>Hexapoda</taxon>
        <taxon>Insecta</taxon>
        <taxon>Pterygota</taxon>
        <taxon>Neoptera</taxon>
        <taxon>Endopterygota</taxon>
        <taxon>Diptera</taxon>
        <taxon>Brachycera</taxon>
        <taxon>Muscomorpha</taxon>
        <taxon>Ephydroidea</taxon>
        <taxon>Drosophilidae</taxon>
        <taxon>Drosophila</taxon>
        <taxon>Hawaiian Drosophila</taxon>
    </lineage>
</organism>
<proteinExistence type="inferred from homology"/>
<dbReference type="EMBL" id="CH916367">
    <property type="protein sequence ID" value="EDW01214.1"/>
    <property type="molecule type" value="Genomic_DNA"/>
</dbReference>
<dbReference type="RefSeq" id="XP_001986347.1">
    <property type="nucleotide sequence ID" value="XM_001986311.1"/>
</dbReference>
<dbReference type="SMR" id="B4J877"/>
<dbReference type="FunCoup" id="B4J877">
    <property type="interactions" value="107"/>
</dbReference>
<dbReference type="STRING" id="7222.B4J877"/>
<dbReference type="eggNOG" id="ENOG502TACJ">
    <property type="taxonomic scope" value="Eukaryota"/>
</dbReference>
<dbReference type="HOGENOM" id="CLU_186352_2_0_1"/>
<dbReference type="InParanoid" id="B4J877"/>
<dbReference type="PhylomeDB" id="B4J877"/>
<dbReference type="Proteomes" id="UP000001070">
    <property type="component" value="Unassembled WGS sequence"/>
</dbReference>
<dbReference type="GO" id="GO:0008250">
    <property type="term" value="C:oligosaccharyltransferase complex"/>
    <property type="evidence" value="ECO:0000250"/>
    <property type="project" value="UniProtKB"/>
</dbReference>
<dbReference type="GO" id="GO:0006487">
    <property type="term" value="P:protein N-linked glycosylation"/>
    <property type="evidence" value="ECO:0000250"/>
    <property type="project" value="UniProtKB"/>
</dbReference>
<dbReference type="GO" id="GO:0018279">
    <property type="term" value="P:protein N-linked glycosylation via asparagine"/>
    <property type="evidence" value="ECO:0007669"/>
    <property type="project" value="TreeGrafter"/>
</dbReference>
<dbReference type="InterPro" id="IPR018943">
    <property type="entry name" value="Oligosaccaryltransferase"/>
</dbReference>
<dbReference type="InterPro" id="IPR051307">
    <property type="entry name" value="OST4"/>
</dbReference>
<dbReference type="InterPro" id="IPR036330">
    <property type="entry name" value="Ost4p_sf"/>
</dbReference>
<dbReference type="PANTHER" id="PTHR48164">
    <property type="entry name" value="DOLICHYL-DIPHOSPHOOLIGOSACCHARIDE--PROTEIN GLYCOSYLTRANSFERASE SUBUNIT 4"/>
    <property type="match status" value="1"/>
</dbReference>
<dbReference type="PANTHER" id="PTHR48164:SF1">
    <property type="entry name" value="DOLICHYL-DIPHOSPHOOLIGOSACCHARIDE--PROTEIN GLYCOSYLTRANSFERASE SUBUNIT 4"/>
    <property type="match status" value="1"/>
</dbReference>
<dbReference type="Pfam" id="PF10215">
    <property type="entry name" value="Ost4"/>
    <property type="match status" value="1"/>
</dbReference>
<dbReference type="SUPFAM" id="SSF103464">
    <property type="entry name" value="Oligosaccharyltransferase subunit ost4p"/>
    <property type="match status" value="1"/>
</dbReference>
<comment type="function">
    <text evidence="2">Subunit of the oligosaccharyl transferase (OST) complex that catalyzes the initial transfer of a defined glycan (Glc(3)Man(9)GlcNAc(2) in eukaryotes) from the lipid carrier dolichol-pyrophosphate to an asparagine residue within an Asn-X-Ser/Thr consensus motif in nascent polypeptide chains, the first step in protein N-glycosylation. N-glycosylation occurs cotranslationally and the complex associates with the Sec61 complex at the channel-forming translocon complex that mediates protein translocation across the endoplasmic reticulum (ER). All subunits are required for a maximal enzyme activity.</text>
</comment>
<comment type="subunit">
    <text evidence="2">Component of the oligosaccharyltransferase (OST) complex.</text>
</comment>
<comment type="subcellular location">
    <subcellularLocation>
        <location evidence="1">Endoplasmic reticulum membrane</location>
        <topology evidence="1">Single-pass type III membrane protein</topology>
    </subcellularLocation>
</comment>
<comment type="similarity">
    <text evidence="4">Belongs to the OST4 family.</text>
</comment>
<name>OST4_DROGR</name>
<accession>B4J877</accession>
<protein>
    <recommendedName>
        <fullName evidence="3">Dolichyl-diphosphooligosaccharide--protein glycosyltransferase subunit 4</fullName>
    </recommendedName>
</protein>
<evidence type="ECO:0000250" key="1"/>
<evidence type="ECO:0000250" key="2">
    <source>
        <dbReference type="UniProtKB" id="P0C6T2"/>
    </source>
</evidence>
<evidence type="ECO:0000250" key="3">
    <source>
        <dbReference type="UniProtKB" id="Q99380"/>
    </source>
</evidence>
<evidence type="ECO:0000255" key="4"/>
<evidence type="ECO:0000312" key="5">
    <source>
        <dbReference type="EMBL" id="EDW01214.1"/>
    </source>
</evidence>
<reference evidence="5" key="1">
    <citation type="journal article" date="2007" name="Nature">
        <title>Evolution of genes and genomes on the Drosophila phylogeny.</title>
        <authorList>
            <consortium name="Drosophila 12 genomes consortium"/>
        </authorList>
    </citation>
    <scope>NUCLEOTIDE SEQUENCE [LARGE SCALE GENOMIC DNA]</scope>
    <source>
        <strain evidence="5">Tucson 15287-2541.00</strain>
    </source>
</reference>